<proteinExistence type="predicted"/>
<feature type="chain" id="PRO_0000055976" description="Protein neuralized">
    <location>
        <begin position="1"/>
        <end position="747"/>
    </location>
</feature>
<feature type="domain" description="NHR 1" evidence="2">
    <location>
        <begin position="97"/>
        <end position="251"/>
    </location>
</feature>
<feature type="domain" description="NHR 2" evidence="2">
    <location>
        <begin position="359"/>
        <end position="514"/>
    </location>
</feature>
<feature type="zinc finger region" description="RING-type" evidence="1">
    <location>
        <begin position="694"/>
        <end position="735"/>
    </location>
</feature>
<feature type="region of interest" description="Disordered" evidence="3">
    <location>
        <begin position="280"/>
        <end position="309"/>
    </location>
</feature>
<feature type="compositionally biased region" description="Low complexity" evidence="3">
    <location>
        <begin position="280"/>
        <end position="292"/>
    </location>
</feature>
<organism>
    <name type="scientific">Drosophila virilis</name>
    <name type="common">Fruit fly</name>
    <dbReference type="NCBI Taxonomy" id="7244"/>
    <lineage>
        <taxon>Eukaryota</taxon>
        <taxon>Metazoa</taxon>
        <taxon>Ecdysozoa</taxon>
        <taxon>Arthropoda</taxon>
        <taxon>Hexapoda</taxon>
        <taxon>Insecta</taxon>
        <taxon>Pterygota</taxon>
        <taxon>Neoptera</taxon>
        <taxon>Endopterygota</taxon>
        <taxon>Diptera</taxon>
        <taxon>Brachycera</taxon>
        <taxon>Muscomorpha</taxon>
        <taxon>Ephydroidea</taxon>
        <taxon>Drosophilidae</taxon>
        <taxon>Drosophila</taxon>
    </lineage>
</organism>
<comment type="function">
    <text>Involved in neurogenesis. Interacts with other neurogenic proteins in the specification of the neuroblast versus epidermoblast cell fate.</text>
</comment>
<comment type="subcellular location">
    <subcellularLocation>
        <location evidence="4">Nucleus</location>
    </subcellularLocation>
</comment>
<reference key="1">
    <citation type="journal article" date="1994" name="Genome">
        <title>Comparison of the neuralized genes of Drosophila virilis and D. melanogaster.</title>
        <authorList>
            <person name="Zhou L."/>
            <person name="Boulianne G.L."/>
        </authorList>
    </citation>
    <scope>NUCLEOTIDE SEQUENCE [GENOMIC DNA]</scope>
</reference>
<sequence>MGLSDIPANYMQQTGHNLQQQQLHHHHHHNHNHNHNAAAAAAAAAHVLAMENSELLMSPKDKMSSKKKMHLLKKIKKRFGLVRRSPSSCPGPNNLPPLQFHTVHGDNIRISRDGTLARRFESFCRAITFSARPVRINERICVKFAEISNNWNGGIRFGFTSNDPASLEGALPKYACPDLTNRPGFWAKALHEQYCEKDNILYYYVNNAGDVIYGINNEEKGVILSGIDTRGLLWTVIDIYGNCTGIEFLDARIYMYQQQQQQQQQQQQQLQQQQLPQQQLPQQQQQLPQQQLTAHHPLQQSRRSLPGGTGVVVDHELERHVMPSLQSLHLAGTAAGIIEHDLANGLPPLRYNANGRLIPVPFHITKGRNVRLSHDRFVASRTESDFCQGYVFTARPIRIGEKLIVQVLKTEQMYVGALALGLTSCNPALLQPNDLPNDSDFLLDRPEYWVVSKDIAAAPQRGDEIAFFVAPNGEVSISKNNGPAVVVMHVDQSLQLWAFLDVYGSTQSLRMFRQQLPNMVAYPSQPQINAAAAAAAAAASTTAASSRMLPMAESLNSLNAGQMLRSKMQLNVTQSSSTLASTAGNGSRMISMPSNGDILQIQPNGGGTVLVVNLPPRSSSHDLNGQLAGRQAASAATVTSSGILAGACSSGTLISTTSSQQYIEPVAQSTSTLNGTKWKDSLSDQQSTDSSAECTICYENPIDSVLYMCGHMCMCYDCAIEQWRGVGGGQCPLCRAVIRDVIRTYTT</sequence>
<evidence type="ECO:0000255" key="1">
    <source>
        <dbReference type="PROSITE-ProRule" id="PRU00175"/>
    </source>
</evidence>
<evidence type="ECO:0000255" key="2">
    <source>
        <dbReference type="PROSITE-ProRule" id="PRU00400"/>
    </source>
</evidence>
<evidence type="ECO:0000256" key="3">
    <source>
        <dbReference type="SAM" id="MobiDB-lite"/>
    </source>
</evidence>
<evidence type="ECO:0000305" key="4"/>
<name>NEUR_DROVI</name>
<protein>
    <recommendedName>
        <fullName>Protein neuralized</fullName>
    </recommendedName>
</protein>
<gene>
    <name type="primary">neur</name>
    <name type="synonym">neu</name>
</gene>
<accession>Q24746</accession>
<keyword id="KW-0217">Developmental protein</keyword>
<keyword id="KW-0221">Differentiation</keyword>
<keyword id="KW-0238">DNA-binding</keyword>
<keyword id="KW-0479">Metal-binding</keyword>
<keyword id="KW-0524">Neurogenesis</keyword>
<keyword id="KW-0539">Nucleus</keyword>
<keyword id="KW-0677">Repeat</keyword>
<keyword id="KW-0862">Zinc</keyword>
<keyword id="KW-0863">Zinc-finger</keyword>
<dbReference type="EMBL" id="U12593">
    <property type="protein sequence ID" value="AAB60619.1"/>
    <property type="molecule type" value="Genomic_DNA"/>
</dbReference>
<dbReference type="EMBL" id="U12591">
    <property type="protein sequence ID" value="AAB60619.1"/>
    <property type="status" value="JOINED"/>
    <property type="molecule type" value="Genomic_DNA"/>
</dbReference>
<dbReference type="EMBL" id="U12592">
    <property type="protein sequence ID" value="AAB60619.1"/>
    <property type="status" value="JOINED"/>
    <property type="molecule type" value="Genomic_DNA"/>
</dbReference>
<dbReference type="SMR" id="Q24746"/>
<dbReference type="eggNOG" id="KOG4172">
    <property type="taxonomic scope" value="Eukaryota"/>
</dbReference>
<dbReference type="eggNOG" id="KOG4625">
    <property type="taxonomic scope" value="Eukaryota"/>
</dbReference>
<dbReference type="OrthoDB" id="6078042at2759"/>
<dbReference type="GO" id="GO:0005768">
    <property type="term" value="C:endosome"/>
    <property type="evidence" value="ECO:0007669"/>
    <property type="project" value="EnsemblMetazoa"/>
</dbReference>
<dbReference type="GO" id="GO:0005634">
    <property type="term" value="C:nucleus"/>
    <property type="evidence" value="ECO:0007669"/>
    <property type="project" value="UniProtKB-SubCell"/>
</dbReference>
<dbReference type="GO" id="GO:0048471">
    <property type="term" value="C:perinuclear region of cytoplasm"/>
    <property type="evidence" value="ECO:0007669"/>
    <property type="project" value="EnsemblMetazoa"/>
</dbReference>
<dbReference type="GO" id="GO:0005886">
    <property type="term" value="C:plasma membrane"/>
    <property type="evidence" value="ECO:0000250"/>
    <property type="project" value="UniProtKB"/>
</dbReference>
<dbReference type="GO" id="GO:0003677">
    <property type="term" value="F:DNA binding"/>
    <property type="evidence" value="ECO:0007669"/>
    <property type="project" value="UniProtKB-KW"/>
</dbReference>
<dbReference type="GO" id="GO:1901981">
    <property type="term" value="F:phosphatidylinositol phosphate binding"/>
    <property type="evidence" value="ECO:0007669"/>
    <property type="project" value="EnsemblMetazoa"/>
</dbReference>
<dbReference type="GO" id="GO:0061630">
    <property type="term" value="F:ubiquitin protein ligase activity"/>
    <property type="evidence" value="ECO:0007669"/>
    <property type="project" value="EnsemblMetazoa"/>
</dbReference>
<dbReference type="GO" id="GO:0004842">
    <property type="term" value="F:ubiquitin-protein transferase activity"/>
    <property type="evidence" value="ECO:0000250"/>
    <property type="project" value="UniProtKB"/>
</dbReference>
<dbReference type="GO" id="GO:0008270">
    <property type="term" value="F:zinc ion binding"/>
    <property type="evidence" value="ECO:0007669"/>
    <property type="project" value="UniProtKB-KW"/>
</dbReference>
<dbReference type="GO" id="GO:0008356">
    <property type="term" value="P:asymmetric cell division"/>
    <property type="evidence" value="ECO:0007669"/>
    <property type="project" value="EnsemblMetazoa"/>
</dbReference>
<dbReference type="GO" id="GO:0048749">
    <property type="term" value="P:compound eye development"/>
    <property type="evidence" value="ECO:0007669"/>
    <property type="project" value="EnsemblMetazoa"/>
</dbReference>
<dbReference type="GO" id="GO:0030718">
    <property type="term" value="P:germ-line stem cell population maintenance"/>
    <property type="evidence" value="ECO:0007669"/>
    <property type="project" value="EnsemblMetazoa"/>
</dbReference>
<dbReference type="GO" id="GO:0007476">
    <property type="term" value="P:imaginal disc-derived wing morphogenesis"/>
    <property type="evidence" value="ECO:0007669"/>
    <property type="project" value="EnsemblMetazoa"/>
</dbReference>
<dbReference type="GO" id="GO:0007616">
    <property type="term" value="P:long-term memory"/>
    <property type="evidence" value="ECO:0007669"/>
    <property type="project" value="EnsemblMetazoa"/>
</dbReference>
<dbReference type="GO" id="GO:0007498">
    <property type="term" value="P:mesoderm development"/>
    <property type="evidence" value="ECO:0000250"/>
    <property type="project" value="UniProtKB"/>
</dbReference>
<dbReference type="GO" id="GO:0035204">
    <property type="term" value="P:negative regulation of lamellocyte differentiation"/>
    <property type="evidence" value="ECO:0007669"/>
    <property type="project" value="EnsemblMetazoa"/>
</dbReference>
<dbReference type="GO" id="GO:0007399">
    <property type="term" value="P:nervous system development"/>
    <property type="evidence" value="ECO:0000250"/>
    <property type="project" value="UniProtKB"/>
</dbReference>
<dbReference type="GO" id="GO:0007422">
    <property type="term" value="P:peripheral nervous system development"/>
    <property type="evidence" value="ECO:0000250"/>
    <property type="project" value="UniProtKB"/>
</dbReference>
<dbReference type="GO" id="GO:0045807">
    <property type="term" value="P:positive regulation of endocytosis"/>
    <property type="evidence" value="ECO:0007669"/>
    <property type="project" value="EnsemblMetazoa"/>
</dbReference>
<dbReference type="GO" id="GO:0045747">
    <property type="term" value="P:positive regulation of Notch signaling pathway"/>
    <property type="evidence" value="ECO:0007669"/>
    <property type="project" value="EnsemblMetazoa"/>
</dbReference>
<dbReference type="GO" id="GO:0008104">
    <property type="term" value="P:protein localization"/>
    <property type="evidence" value="ECO:0007669"/>
    <property type="project" value="EnsemblMetazoa"/>
</dbReference>
<dbReference type="GO" id="GO:0000209">
    <property type="term" value="P:protein polyubiquitination"/>
    <property type="evidence" value="ECO:0007669"/>
    <property type="project" value="EnsemblMetazoa"/>
</dbReference>
<dbReference type="GO" id="GO:0045314">
    <property type="term" value="P:regulation of compound eye photoreceptor development"/>
    <property type="evidence" value="ECO:0007669"/>
    <property type="project" value="EnsemblMetazoa"/>
</dbReference>
<dbReference type="GO" id="GO:0007423">
    <property type="term" value="P:sensory organ development"/>
    <property type="evidence" value="ECO:0000250"/>
    <property type="project" value="UniProtKB"/>
</dbReference>
<dbReference type="GO" id="GO:0016360">
    <property type="term" value="P:sensory organ precursor cell fate determination"/>
    <property type="evidence" value="ECO:0000250"/>
    <property type="project" value="UniProtKB"/>
</dbReference>
<dbReference type="CDD" id="cd16647">
    <property type="entry name" value="mRING-HC-C3HC5_NEU1"/>
    <property type="match status" value="1"/>
</dbReference>
<dbReference type="FunFam" id="3.30.40.10:FF:000441">
    <property type="entry name" value="Neuralized, isoform B"/>
    <property type="match status" value="1"/>
</dbReference>
<dbReference type="FunFam" id="2.60.120.920:FF:000005">
    <property type="entry name" value="Putative E3 ubiquitin-protein ligase NEURL1B"/>
    <property type="match status" value="2"/>
</dbReference>
<dbReference type="Gene3D" id="2.60.120.920">
    <property type="match status" value="2"/>
</dbReference>
<dbReference type="Gene3D" id="3.30.40.10">
    <property type="entry name" value="Zinc/RING finger domain, C3HC4 (zinc finger)"/>
    <property type="match status" value="1"/>
</dbReference>
<dbReference type="InterPro" id="IPR043136">
    <property type="entry name" value="B30.2/SPRY_sf"/>
</dbReference>
<dbReference type="InterPro" id="IPR037962">
    <property type="entry name" value="Neuralized"/>
</dbReference>
<dbReference type="InterPro" id="IPR006573">
    <property type="entry name" value="NHR_dom"/>
</dbReference>
<dbReference type="InterPro" id="IPR001841">
    <property type="entry name" value="Znf_RING"/>
</dbReference>
<dbReference type="InterPro" id="IPR013083">
    <property type="entry name" value="Znf_RING/FYVE/PHD"/>
</dbReference>
<dbReference type="PANTHER" id="PTHR12429">
    <property type="entry name" value="NEURALIZED"/>
    <property type="match status" value="1"/>
</dbReference>
<dbReference type="PANTHER" id="PTHR12429:SF6">
    <property type="entry name" value="PROTEIN NEURALIZED"/>
    <property type="match status" value="1"/>
</dbReference>
<dbReference type="Pfam" id="PF07177">
    <property type="entry name" value="Neuralized"/>
    <property type="match status" value="2"/>
</dbReference>
<dbReference type="Pfam" id="PF13920">
    <property type="entry name" value="zf-C3HC4_3"/>
    <property type="match status" value="1"/>
</dbReference>
<dbReference type="SMART" id="SM00588">
    <property type="entry name" value="NEUZ"/>
    <property type="match status" value="2"/>
</dbReference>
<dbReference type="SMART" id="SM00184">
    <property type="entry name" value="RING"/>
    <property type="match status" value="1"/>
</dbReference>
<dbReference type="SUPFAM" id="SSF81995">
    <property type="entry name" value="beta-sandwich domain of Sec23/24"/>
    <property type="match status" value="1"/>
</dbReference>
<dbReference type="SUPFAM" id="SSF57850">
    <property type="entry name" value="RING/U-box"/>
    <property type="match status" value="1"/>
</dbReference>
<dbReference type="PROSITE" id="PS51065">
    <property type="entry name" value="NHR"/>
    <property type="match status" value="2"/>
</dbReference>
<dbReference type="PROSITE" id="PS50089">
    <property type="entry name" value="ZF_RING_2"/>
    <property type="match status" value="1"/>
</dbReference>